<feature type="chain" id="PRO_0000194742" description="Small ribosomal subunit protein eS21">
    <location>
        <begin position="1"/>
        <end position="83"/>
    </location>
</feature>
<sequence length="83" mass="9115">MENDAGESVDLYCPRKCSASNRIIHAKDHASVQLNIVDVDPETGRMTVGSKTYAICGEIRRMGESDDCIVRLAKKDGLITKAF</sequence>
<keyword id="KW-0963">Cytoplasm</keyword>
<keyword id="KW-0256">Endoplasmic reticulum</keyword>
<keyword id="KW-0687">Ribonucleoprotein</keyword>
<keyword id="KW-0689">Ribosomal protein</keyword>
<comment type="subunit">
    <text evidence="1">Component of the 40S small ribosomal subunit. Interacts with sta.</text>
</comment>
<comment type="subcellular location">
    <subcellularLocation>
        <location evidence="2">Cytoplasm</location>
        <location evidence="2">Cytosol</location>
    </subcellularLocation>
    <subcellularLocation>
        <location evidence="2">Cytoplasm</location>
    </subcellularLocation>
    <subcellularLocation>
        <location evidence="3">Rough endoplasmic reticulum</location>
    </subcellularLocation>
    <text evidence="2 3">Detected on cytosolic polysomes (By similarity). Detected in ribosomes that are associated with the rough endoplasmic reticulum (By similarity).</text>
</comment>
<comment type="developmental stage">
    <text evidence="4">Expressed both maternally and zygotically. Zygotic expression is high in middle-stage embryos, lower in middle-stage larvae, dropping through pupal development to be much lower in adults.</text>
</comment>
<comment type="similarity">
    <text evidence="5">Belongs to the eukaryotic ribosomal protein eS21 family.</text>
</comment>
<evidence type="ECO:0000250" key="1">
    <source>
        <dbReference type="UniProtKB" id="O76927"/>
    </source>
</evidence>
<evidence type="ECO:0000250" key="2">
    <source>
        <dbReference type="UniProtKB" id="P63220"/>
    </source>
</evidence>
<evidence type="ECO:0000250" key="3">
    <source>
        <dbReference type="UniProtKB" id="P63221"/>
    </source>
</evidence>
<evidence type="ECO:0000269" key="4">
    <source>
    </source>
</evidence>
<evidence type="ECO:0000305" key="5"/>
<dbReference type="EMBL" id="AJ507827">
    <property type="protein sequence ID" value="CAD47834.1"/>
    <property type="molecule type" value="mRNA"/>
</dbReference>
<dbReference type="SMR" id="Q8I7N7"/>
<dbReference type="EnsemblMetazoa" id="XM_004535453.3">
    <property type="protein sequence ID" value="XP_004535510.1"/>
    <property type="gene ID" value="LOC101451893"/>
</dbReference>
<dbReference type="GeneID" id="101451893"/>
<dbReference type="KEGG" id="ccat:101451893"/>
<dbReference type="CTD" id="6227"/>
<dbReference type="OrthoDB" id="278325at2759"/>
<dbReference type="GO" id="GO:0005829">
    <property type="term" value="C:cytosol"/>
    <property type="evidence" value="ECO:0007669"/>
    <property type="project" value="UniProtKB-SubCell"/>
</dbReference>
<dbReference type="GO" id="GO:1990904">
    <property type="term" value="C:ribonucleoprotein complex"/>
    <property type="evidence" value="ECO:0007669"/>
    <property type="project" value="UniProtKB-KW"/>
</dbReference>
<dbReference type="GO" id="GO:0005840">
    <property type="term" value="C:ribosome"/>
    <property type="evidence" value="ECO:0007669"/>
    <property type="project" value="UniProtKB-KW"/>
</dbReference>
<dbReference type="GO" id="GO:0005791">
    <property type="term" value="C:rough endoplasmic reticulum"/>
    <property type="evidence" value="ECO:0007669"/>
    <property type="project" value="UniProtKB-SubCell"/>
</dbReference>
<dbReference type="GO" id="GO:0003735">
    <property type="term" value="F:structural constituent of ribosome"/>
    <property type="evidence" value="ECO:0007669"/>
    <property type="project" value="InterPro"/>
</dbReference>
<dbReference type="GO" id="GO:0006412">
    <property type="term" value="P:translation"/>
    <property type="evidence" value="ECO:0007669"/>
    <property type="project" value="InterPro"/>
</dbReference>
<dbReference type="FunFam" id="3.30.1230.20:FF:000001">
    <property type="entry name" value="40S ribosomal protein S21"/>
    <property type="match status" value="1"/>
</dbReference>
<dbReference type="Gene3D" id="3.30.1230.20">
    <property type="match status" value="1"/>
</dbReference>
<dbReference type="InterPro" id="IPR001931">
    <property type="entry name" value="Ribosomal_eS21"/>
</dbReference>
<dbReference type="InterPro" id="IPR018279">
    <property type="entry name" value="Ribosomal_eS21_CS"/>
</dbReference>
<dbReference type="InterPro" id="IPR038579">
    <property type="entry name" value="Ribosomal_eS21_sf"/>
</dbReference>
<dbReference type="PANTHER" id="PTHR10442">
    <property type="entry name" value="40S RIBOSOMAL PROTEIN S21"/>
    <property type="match status" value="1"/>
</dbReference>
<dbReference type="Pfam" id="PF01249">
    <property type="entry name" value="Ribosomal_S21e"/>
    <property type="match status" value="1"/>
</dbReference>
<dbReference type="PIRSF" id="PIRSF002148">
    <property type="entry name" value="Ribosomal_S21e"/>
    <property type="match status" value="1"/>
</dbReference>
<dbReference type="PROSITE" id="PS00996">
    <property type="entry name" value="RIBOSOMAL_S21E"/>
    <property type="match status" value="1"/>
</dbReference>
<name>RS21_CERCA</name>
<proteinExistence type="evidence at transcript level"/>
<organism>
    <name type="scientific">Ceratitis capitata</name>
    <name type="common">Mediterranean fruit fly</name>
    <name type="synonym">Tephritis capitata</name>
    <dbReference type="NCBI Taxonomy" id="7213"/>
    <lineage>
        <taxon>Eukaryota</taxon>
        <taxon>Metazoa</taxon>
        <taxon>Ecdysozoa</taxon>
        <taxon>Arthropoda</taxon>
        <taxon>Hexapoda</taxon>
        <taxon>Insecta</taxon>
        <taxon>Pterygota</taxon>
        <taxon>Neoptera</taxon>
        <taxon>Endopterygota</taxon>
        <taxon>Diptera</taxon>
        <taxon>Brachycera</taxon>
        <taxon>Muscomorpha</taxon>
        <taxon>Tephritoidea</taxon>
        <taxon>Tephritidae</taxon>
        <taxon>Ceratitis</taxon>
        <taxon>Ceratitis</taxon>
    </lineage>
</organism>
<gene>
    <name type="primary">RpS21</name>
</gene>
<reference key="1">
    <citation type="journal article" date="2004" name="Arch. Insect Biochem. Physiol.">
        <title>Cloning, characterization, and developmental expression of the ribosomal protein S21 gene of the Mediterranean fruit fly Ceratitis capitata.</title>
        <authorList>
            <person name="Verras M."/>
            <person name="Theodoraki M.A."/>
            <person name="Mintzas A.C."/>
        </authorList>
    </citation>
    <scope>NUCLEOTIDE SEQUENCE [MRNA]</scope>
    <scope>DEVELOPMENTAL STAGE</scope>
    <source>
        <tissue>Larva</tissue>
    </source>
</reference>
<protein>
    <recommendedName>
        <fullName evidence="5">Small ribosomal subunit protein eS21</fullName>
    </recommendedName>
    <alternativeName>
        <fullName>40S ribosomal protein S21</fullName>
    </alternativeName>
</protein>
<accession>Q8I7N7</accession>